<comment type="function">
    <text evidence="1">Catalyzes the N-acylation of UDP-3-O-acylglucosamine using 3-hydroxyacyl-ACP as the acyl donor. Is involved in the biosynthesis of lipid A, a phosphorylated glycolipid that anchors the lipopolysaccharide to the outer membrane of the cell.</text>
</comment>
<comment type="catalytic activity">
    <reaction evidence="1">
        <text>a UDP-3-O-[(3R)-3-hydroxyacyl]-alpha-D-glucosamine + a (3R)-hydroxyacyl-[ACP] = a UDP-2-N,3-O-bis[(3R)-3-hydroxyacyl]-alpha-D-glucosamine + holo-[ACP] + H(+)</text>
        <dbReference type="Rhea" id="RHEA:53836"/>
        <dbReference type="Rhea" id="RHEA-COMP:9685"/>
        <dbReference type="Rhea" id="RHEA-COMP:9945"/>
        <dbReference type="ChEBI" id="CHEBI:15378"/>
        <dbReference type="ChEBI" id="CHEBI:64479"/>
        <dbReference type="ChEBI" id="CHEBI:78827"/>
        <dbReference type="ChEBI" id="CHEBI:137740"/>
        <dbReference type="ChEBI" id="CHEBI:137748"/>
        <dbReference type="EC" id="2.3.1.191"/>
    </reaction>
</comment>
<comment type="pathway">
    <text evidence="1">Bacterial outer membrane biogenesis; LPS lipid A biosynthesis.</text>
</comment>
<comment type="subunit">
    <text evidence="1">Homotrimer.</text>
</comment>
<comment type="similarity">
    <text evidence="1">Belongs to the transferase hexapeptide repeat family. LpxD subfamily.</text>
</comment>
<dbReference type="EC" id="2.3.1.191" evidence="1"/>
<dbReference type="EMBL" id="CP000848">
    <property type="protein sequence ID" value="ABV75605.1"/>
    <property type="molecule type" value="Genomic_DNA"/>
</dbReference>
<dbReference type="RefSeq" id="WP_012150232.1">
    <property type="nucleotide sequence ID" value="NZ_CP121767.1"/>
</dbReference>
<dbReference type="SMR" id="A8GQD0"/>
<dbReference type="GeneID" id="79936822"/>
<dbReference type="KEGG" id="rri:A1G_00045"/>
<dbReference type="HOGENOM" id="CLU_049865_0_0_5"/>
<dbReference type="UniPathway" id="UPA00973"/>
<dbReference type="Proteomes" id="UP000006832">
    <property type="component" value="Chromosome"/>
</dbReference>
<dbReference type="GO" id="GO:0016020">
    <property type="term" value="C:membrane"/>
    <property type="evidence" value="ECO:0007669"/>
    <property type="project" value="GOC"/>
</dbReference>
<dbReference type="GO" id="GO:0016410">
    <property type="term" value="F:N-acyltransferase activity"/>
    <property type="evidence" value="ECO:0007669"/>
    <property type="project" value="InterPro"/>
</dbReference>
<dbReference type="GO" id="GO:0009245">
    <property type="term" value="P:lipid A biosynthetic process"/>
    <property type="evidence" value="ECO:0007669"/>
    <property type="project" value="UniProtKB-UniRule"/>
</dbReference>
<dbReference type="CDD" id="cd03352">
    <property type="entry name" value="LbH_LpxD"/>
    <property type="match status" value="1"/>
</dbReference>
<dbReference type="Gene3D" id="2.160.10.10">
    <property type="entry name" value="Hexapeptide repeat proteins"/>
    <property type="match status" value="1"/>
</dbReference>
<dbReference type="Gene3D" id="3.40.1390.10">
    <property type="entry name" value="MurE/MurF, N-terminal domain"/>
    <property type="match status" value="1"/>
</dbReference>
<dbReference type="HAMAP" id="MF_00523">
    <property type="entry name" value="LpxD"/>
    <property type="match status" value="1"/>
</dbReference>
<dbReference type="InterPro" id="IPR001451">
    <property type="entry name" value="Hexapep"/>
</dbReference>
<dbReference type="InterPro" id="IPR018357">
    <property type="entry name" value="Hexapep_transf_CS"/>
</dbReference>
<dbReference type="InterPro" id="IPR007691">
    <property type="entry name" value="LpxD"/>
</dbReference>
<dbReference type="InterPro" id="IPR011004">
    <property type="entry name" value="Trimer_LpxA-like_sf"/>
</dbReference>
<dbReference type="InterPro" id="IPR020573">
    <property type="entry name" value="UDP_GlcNAc_AcTrfase_non-rep"/>
</dbReference>
<dbReference type="NCBIfam" id="TIGR01853">
    <property type="entry name" value="lipid_A_lpxD"/>
    <property type="match status" value="1"/>
</dbReference>
<dbReference type="NCBIfam" id="NF002060">
    <property type="entry name" value="PRK00892.1"/>
    <property type="match status" value="1"/>
</dbReference>
<dbReference type="PANTHER" id="PTHR43378">
    <property type="entry name" value="UDP-3-O-ACYLGLUCOSAMINE N-ACYLTRANSFERASE"/>
    <property type="match status" value="1"/>
</dbReference>
<dbReference type="PANTHER" id="PTHR43378:SF2">
    <property type="entry name" value="UDP-3-O-ACYLGLUCOSAMINE N-ACYLTRANSFERASE 1, MITOCHONDRIAL-RELATED"/>
    <property type="match status" value="1"/>
</dbReference>
<dbReference type="Pfam" id="PF00132">
    <property type="entry name" value="Hexapep"/>
    <property type="match status" value="1"/>
</dbReference>
<dbReference type="Pfam" id="PF04613">
    <property type="entry name" value="LpxD"/>
    <property type="match status" value="1"/>
</dbReference>
<dbReference type="SUPFAM" id="SSF51161">
    <property type="entry name" value="Trimeric LpxA-like enzymes"/>
    <property type="match status" value="1"/>
</dbReference>
<dbReference type="PROSITE" id="PS00101">
    <property type="entry name" value="HEXAPEP_TRANSFERASES"/>
    <property type="match status" value="2"/>
</dbReference>
<name>LPXD_RICRS</name>
<evidence type="ECO:0000255" key="1">
    <source>
        <dbReference type="HAMAP-Rule" id="MF_00523"/>
    </source>
</evidence>
<gene>
    <name evidence="1" type="primary">lpxD</name>
    <name type="ordered locus">A1G_00045</name>
</gene>
<accession>A8GQD0</accession>
<protein>
    <recommendedName>
        <fullName evidence="1">UDP-3-O-acylglucosamine N-acyltransferase</fullName>
        <ecNumber evidence="1">2.3.1.191</ecNumber>
    </recommendedName>
</protein>
<keyword id="KW-0012">Acyltransferase</keyword>
<keyword id="KW-0441">Lipid A biosynthesis</keyword>
<keyword id="KW-0444">Lipid biosynthesis</keyword>
<keyword id="KW-0443">Lipid metabolism</keyword>
<keyword id="KW-0677">Repeat</keyword>
<keyword id="KW-0808">Transferase</keyword>
<proteinExistence type="inferred from homology"/>
<sequence>MVSSNFYKNLGPRKLTAIIDFLHDIIAPPKIEDIAIHDIKILQEASPNDISFLSNPKYSEFLKTTKAAACIVPKNFTGEANPNTVLLHAQNSYFAYGKLIDFFYAPIKSYPTKIMKSAIVADSATIGKNCYIGHNVVIEDDVIIGDNSIIEAGSFIGRGVNIGRNARIEQHVSINYAIIGDDVVILAGAKIGQDGFGFSTEKGVHHKIFHIGIVKIGNNVEIGANTTIDRGSLQDTIIKDLCRIDNLVQIGHGVKIGKGSIIVAQTGIAGSSTIGKYCALGGQVGIAGHLNIGDGAQVAAQGGVAQNIEAGKIVGGSPAIPIMDWHRQSIIMKQLLKTSNSKLKK</sequence>
<reference key="1">
    <citation type="submission" date="2007-09" db="EMBL/GenBank/DDBJ databases">
        <title>Complete genome sequence of Rickettsia rickettsii.</title>
        <authorList>
            <person name="Madan A."/>
            <person name="Fahey J."/>
            <person name="Helton E."/>
            <person name="Ketteman M."/>
            <person name="Madan A."/>
            <person name="Rodrigues S."/>
            <person name="Sanchez A."/>
            <person name="Dasch G."/>
            <person name="Eremeeva M."/>
        </authorList>
    </citation>
    <scope>NUCLEOTIDE SEQUENCE [LARGE SCALE GENOMIC DNA]</scope>
    <source>
        <strain>Sheila Smith</strain>
    </source>
</reference>
<feature type="chain" id="PRO_1000050959" description="UDP-3-O-acylglucosamine N-acyltransferase">
    <location>
        <begin position="1"/>
        <end position="345"/>
    </location>
</feature>
<feature type="active site" description="Proton acceptor" evidence="1">
    <location>
        <position position="252"/>
    </location>
</feature>
<organism>
    <name type="scientific">Rickettsia rickettsii (strain Sheila Smith)</name>
    <dbReference type="NCBI Taxonomy" id="392021"/>
    <lineage>
        <taxon>Bacteria</taxon>
        <taxon>Pseudomonadati</taxon>
        <taxon>Pseudomonadota</taxon>
        <taxon>Alphaproteobacteria</taxon>
        <taxon>Rickettsiales</taxon>
        <taxon>Rickettsiaceae</taxon>
        <taxon>Rickettsieae</taxon>
        <taxon>Rickettsia</taxon>
        <taxon>spotted fever group</taxon>
    </lineage>
</organism>